<gene>
    <name evidence="1" type="primary">rps11</name>
</gene>
<protein>
    <recommendedName>
        <fullName evidence="1">Small ribosomal subunit protein uS11c</fullName>
    </recommendedName>
    <alternativeName>
        <fullName evidence="2">30S ribosomal protein S11, chloroplastic</fullName>
    </alternativeName>
</protein>
<reference key="1">
    <citation type="journal article" date="2007" name="Theor. Appl. Genet.">
        <title>Complete chloroplast genome sequences of Hordeum vulgare, Sorghum bicolor and Agrostis stolonifera, and comparative analyses with other grass genomes.</title>
        <authorList>
            <person name="Saski C."/>
            <person name="Lee S.-B."/>
            <person name="Fjellheim S."/>
            <person name="Guda C."/>
            <person name="Jansen R.K."/>
            <person name="Luo H."/>
            <person name="Tomkins J."/>
            <person name="Rognli O.A."/>
            <person name="Daniell H."/>
            <person name="Clarke J.L."/>
        </authorList>
    </citation>
    <scope>NUCLEOTIDE SEQUENCE [LARGE SCALE GENOMIC DNA]</scope>
    <source>
        <strain>cv. Penn A-4</strain>
    </source>
</reference>
<keyword id="KW-0150">Chloroplast</keyword>
<keyword id="KW-0934">Plastid</keyword>
<keyword id="KW-0687">Ribonucleoprotein</keyword>
<keyword id="KW-0689">Ribosomal protein</keyword>
<keyword id="KW-0694">RNA-binding</keyword>
<keyword id="KW-0699">rRNA-binding</keyword>
<accession>A1EA41</accession>
<comment type="subunit">
    <text evidence="1">Part of the 30S ribosomal subunit.</text>
</comment>
<comment type="subcellular location">
    <subcellularLocation>
        <location>Plastid</location>
        <location>Chloroplast</location>
    </subcellularLocation>
</comment>
<comment type="similarity">
    <text evidence="1">Belongs to the universal ribosomal protein uS11 family.</text>
</comment>
<feature type="chain" id="PRO_0000276641" description="Small ribosomal subunit protein uS11c">
    <location>
        <begin position="1"/>
        <end position="143"/>
    </location>
</feature>
<sequence length="143" mass="15566">MAKAIPKIGSRKKVRIGLRRNARFSLRKSARRITKGVIHVQASFNNTIITVTDPQGRVVFWSSAGTCGFKSSRKASPYAGQRTAVDAIRTVGLQRAEVMVKGAGSGRDAALRAIAKSGVRLSCIRDVTPMPHNGCRPPKKRRL</sequence>
<name>RR11_AGRST</name>
<evidence type="ECO:0000255" key="1">
    <source>
        <dbReference type="HAMAP-Rule" id="MF_01310"/>
    </source>
</evidence>
<evidence type="ECO:0000305" key="2"/>
<organism>
    <name type="scientific">Agrostis stolonifera</name>
    <name type="common">Creeping bentgrass</name>
    <dbReference type="NCBI Taxonomy" id="63632"/>
    <lineage>
        <taxon>Eukaryota</taxon>
        <taxon>Viridiplantae</taxon>
        <taxon>Streptophyta</taxon>
        <taxon>Embryophyta</taxon>
        <taxon>Tracheophyta</taxon>
        <taxon>Spermatophyta</taxon>
        <taxon>Magnoliopsida</taxon>
        <taxon>Liliopsida</taxon>
        <taxon>Poales</taxon>
        <taxon>Poaceae</taxon>
        <taxon>BOP clade</taxon>
        <taxon>Pooideae</taxon>
        <taxon>Poodae</taxon>
        <taxon>Poeae</taxon>
        <taxon>Poeae Chloroplast Group 1 (Aveneae type)</taxon>
        <taxon>Agrostidodinae</taxon>
        <taxon>Agrostidinae</taxon>
        <taxon>Agrostis</taxon>
    </lineage>
</organism>
<dbReference type="EMBL" id="EF115543">
    <property type="protein sequence ID" value="ABK79612.1"/>
    <property type="molecule type" value="Genomic_DNA"/>
</dbReference>
<dbReference type="RefSeq" id="YP_874769.1">
    <property type="nucleotide sequence ID" value="NC_008591.1"/>
</dbReference>
<dbReference type="SMR" id="A1EA41"/>
<dbReference type="GeneID" id="4525014"/>
<dbReference type="GO" id="GO:0009507">
    <property type="term" value="C:chloroplast"/>
    <property type="evidence" value="ECO:0007669"/>
    <property type="project" value="UniProtKB-SubCell"/>
</dbReference>
<dbReference type="GO" id="GO:1990904">
    <property type="term" value="C:ribonucleoprotein complex"/>
    <property type="evidence" value="ECO:0007669"/>
    <property type="project" value="UniProtKB-KW"/>
</dbReference>
<dbReference type="GO" id="GO:0005840">
    <property type="term" value="C:ribosome"/>
    <property type="evidence" value="ECO:0007669"/>
    <property type="project" value="UniProtKB-KW"/>
</dbReference>
<dbReference type="GO" id="GO:0019843">
    <property type="term" value="F:rRNA binding"/>
    <property type="evidence" value="ECO:0007669"/>
    <property type="project" value="UniProtKB-UniRule"/>
</dbReference>
<dbReference type="GO" id="GO:0003735">
    <property type="term" value="F:structural constituent of ribosome"/>
    <property type="evidence" value="ECO:0007669"/>
    <property type="project" value="InterPro"/>
</dbReference>
<dbReference type="GO" id="GO:0006412">
    <property type="term" value="P:translation"/>
    <property type="evidence" value="ECO:0007669"/>
    <property type="project" value="UniProtKB-UniRule"/>
</dbReference>
<dbReference type="FunFam" id="3.30.420.80:FF:000003">
    <property type="entry name" value="30S ribosomal protein S11, chloroplastic"/>
    <property type="match status" value="1"/>
</dbReference>
<dbReference type="Gene3D" id="3.30.420.80">
    <property type="entry name" value="Ribosomal protein S11"/>
    <property type="match status" value="1"/>
</dbReference>
<dbReference type="HAMAP" id="MF_01310">
    <property type="entry name" value="Ribosomal_uS11"/>
    <property type="match status" value="1"/>
</dbReference>
<dbReference type="InterPro" id="IPR001971">
    <property type="entry name" value="Ribosomal_uS11"/>
</dbReference>
<dbReference type="InterPro" id="IPR018102">
    <property type="entry name" value="Ribosomal_uS11_CS"/>
</dbReference>
<dbReference type="InterPro" id="IPR036967">
    <property type="entry name" value="Ribosomal_uS11_sf"/>
</dbReference>
<dbReference type="NCBIfam" id="NF003698">
    <property type="entry name" value="PRK05309.1"/>
    <property type="match status" value="1"/>
</dbReference>
<dbReference type="PANTHER" id="PTHR11759">
    <property type="entry name" value="40S RIBOSOMAL PROTEIN S14/30S RIBOSOMAL PROTEIN S11"/>
    <property type="match status" value="1"/>
</dbReference>
<dbReference type="Pfam" id="PF00411">
    <property type="entry name" value="Ribosomal_S11"/>
    <property type="match status" value="1"/>
</dbReference>
<dbReference type="PIRSF" id="PIRSF002131">
    <property type="entry name" value="Ribosomal_S11"/>
    <property type="match status" value="1"/>
</dbReference>
<dbReference type="SUPFAM" id="SSF53137">
    <property type="entry name" value="Translational machinery components"/>
    <property type="match status" value="1"/>
</dbReference>
<dbReference type="PROSITE" id="PS00054">
    <property type="entry name" value="RIBOSOMAL_S11"/>
    <property type="match status" value="1"/>
</dbReference>
<proteinExistence type="inferred from homology"/>
<geneLocation type="chloroplast"/>